<sequence length="319" mass="36837">MTNSIPWIEKYRPVNIDDVIIDDNISKQINIFLQDRENVHLIITGSPGVGKTSTVRCIAKELLGEDMSQGYLEINAAEDRGVRSISTIIPPFCKKVFAANKSKIILLDEADIMTSKCQYDINNMIKKFGRKTKFIFTCNDSSKIIEDIQSICRILRFKKLTDEQINQYLSKICVNEKIPYDEQGLRTICYISNGDMRKSINDLQKTAFTFEKITKNLVLKICKVPDPEDIRKIISLCLESNLEKADEIMNNIIKLDYCYFDIVTSFIYVLKVYDMSENLRLRLIMIVNETKINISKGLRSKLQLTGMICRLIKEIQRDE</sequence>
<proteinExistence type="inferred from homology"/>
<feature type="chain" id="PRO_0000247134" description="Putative replication factor C small subunit R395">
    <location>
        <begin position="1"/>
        <end position="319"/>
    </location>
</feature>
<feature type="binding site" evidence="2">
    <location>
        <begin position="45"/>
        <end position="52"/>
    </location>
    <ligand>
        <name>ATP</name>
        <dbReference type="ChEBI" id="CHEBI:30616"/>
    </ligand>
</feature>
<evidence type="ECO:0000250" key="1"/>
<evidence type="ECO:0000255" key="2"/>
<evidence type="ECO:0000305" key="3"/>
<protein>
    <recommendedName>
        <fullName>Putative replication factor C small subunit R395</fullName>
        <shortName>RFC small subunit R395</shortName>
    </recommendedName>
    <alternativeName>
        <fullName>Clamp loader small subunit R395</fullName>
    </alternativeName>
</protein>
<reference key="1">
    <citation type="journal article" date="2004" name="Science">
        <title>The 1.2-megabase genome sequence of Mimivirus.</title>
        <authorList>
            <person name="Raoult D."/>
            <person name="Audic S."/>
            <person name="Robert C."/>
            <person name="Abergel C."/>
            <person name="Renesto P."/>
            <person name="Ogata H."/>
            <person name="La Scola B."/>
            <person name="Susan M."/>
            <person name="Claverie J.-M."/>
        </authorList>
    </citation>
    <scope>NUCLEOTIDE SEQUENCE [LARGE SCALE GENOMIC DNA]</scope>
    <source>
        <strain>Rowbotham-Bradford</strain>
    </source>
</reference>
<organism>
    <name type="scientific">Acanthamoeba polyphaga mimivirus</name>
    <name type="common">APMV</name>
    <dbReference type="NCBI Taxonomy" id="212035"/>
    <lineage>
        <taxon>Viruses</taxon>
        <taxon>Varidnaviria</taxon>
        <taxon>Bamfordvirae</taxon>
        <taxon>Nucleocytoviricota</taxon>
        <taxon>Megaviricetes</taxon>
        <taxon>Imitervirales</taxon>
        <taxon>Mimiviridae</taxon>
        <taxon>Megamimivirinae</taxon>
        <taxon>Mimivirus</taxon>
        <taxon>Mimivirus bradfordmassiliense</taxon>
    </lineage>
</organism>
<name>RFCS1_MIMIV</name>
<dbReference type="EMBL" id="AY653733">
    <property type="protein sequence ID" value="AAV50664.1"/>
    <property type="molecule type" value="Genomic_DNA"/>
</dbReference>
<dbReference type="SMR" id="Q5UQ47"/>
<dbReference type="KEGG" id="vg:9925016"/>
<dbReference type="OrthoDB" id="4962at10239"/>
<dbReference type="Proteomes" id="UP000001134">
    <property type="component" value="Genome"/>
</dbReference>
<dbReference type="GO" id="GO:0005524">
    <property type="term" value="F:ATP binding"/>
    <property type="evidence" value="ECO:0007669"/>
    <property type="project" value="UniProtKB-KW"/>
</dbReference>
<dbReference type="GO" id="GO:0016887">
    <property type="term" value="F:ATP hydrolysis activity"/>
    <property type="evidence" value="ECO:0007669"/>
    <property type="project" value="InterPro"/>
</dbReference>
<dbReference type="GO" id="GO:0003677">
    <property type="term" value="F:DNA binding"/>
    <property type="evidence" value="ECO:0007669"/>
    <property type="project" value="InterPro"/>
</dbReference>
<dbReference type="GO" id="GO:0003689">
    <property type="term" value="F:DNA clamp loader activity"/>
    <property type="evidence" value="ECO:0007669"/>
    <property type="project" value="TreeGrafter"/>
</dbReference>
<dbReference type="GO" id="GO:0006281">
    <property type="term" value="P:DNA repair"/>
    <property type="evidence" value="ECO:0007669"/>
    <property type="project" value="TreeGrafter"/>
</dbReference>
<dbReference type="GO" id="GO:0006261">
    <property type="term" value="P:DNA-templated DNA replication"/>
    <property type="evidence" value="ECO:0007669"/>
    <property type="project" value="TreeGrafter"/>
</dbReference>
<dbReference type="CDD" id="cd00009">
    <property type="entry name" value="AAA"/>
    <property type="match status" value="1"/>
</dbReference>
<dbReference type="CDD" id="cd18140">
    <property type="entry name" value="HLD_clamp_RFC"/>
    <property type="match status" value="1"/>
</dbReference>
<dbReference type="Gene3D" id="1.10.8.60">
    <property type="match status" value="1"/>
</dbReference>
<dbReference type="Gene3D" id="1.20.272.10">
    <property type="match status" value="1"/>
</dbReference>
<dbReference type="Gene3D" id="3.40.50.300">
    <property type="entry name" value="P-loop containing nucleotide triphosphate hydrolases"/>
    <property type="match status" value="1"/>
</dbReference>
<dbReference type="InterPro" id="IPR003593">
    <property type="entry name" value="AAA+_ATPase"/>
</dbReference>
<dbReference type="InterPro" id="IPR003959">
    <property type="entry name" value="ATPase_AAA_core"/>
</dbReference>
<dbReference type="InterPro" id="IPR008921">
    <property type="entry name" value="DNA_pol3_clamp-load_cplx_C"/>
</dbReference>
<dbReference type="InterPro" id="IPR050238">
    <property type="entry name" value="DNA_Rep/Repair_Clamp_Loader"/>
</dbReference>
<dbReference type="InterPro" id="IPR027417">
    <property type="entry name" value="P-loop_NTPase"/>
</dbReference>
<dbReference type="InterPro" id="IPR013748">
    <property type="entry name" value="Rep_factorC_C"/>
</dbReference>
<dbReference type="InterPro" id="IPR047854">
    <property type="entry name" value="RFC_lid"/>
</dbReference>
<dbReference type="PANTHER" id="PTHR11669">
    <property type="entry name" value="REPLICATION FACTOR C / DNA POLYMERASE III GAMMA-TAU SUBUNIT"/>
    <property type="match status" value="1"/>
</dbReference>
<dbReference type="PANTHER" id="PTHR11669:SF5">
    <property type="entry name" value="REPLICATION FACTOR C SUBUNIT 2"/>
    <property type="match status" value="1"/>
</dbReference>
<dbReference type="Pfam" id="PF00004">
    <property type="entry name" value="AAA"/>
    <property type="match status" value="1"/>
</dbReference>
<dbReference type="Pfam" id="PF21960">
    <property type="entry name" value="RCF1-5-like_lid"/>
    <property type="match status" value="1"/>
</dbReference>
<dbReference type="Pfam" id="PF08542">
    <property type="entry name" value="Rep_fac_C"/>
    <property type="match status" value="1"/>
</dbReference>
<dbReference type="SMART" id="SM00382">
    <property type="entry name" value="AAA"/>
    <property type="match status" value="1"/>
</dbReference>
<dbReference type="SUPFAM" id="SSF52540">
    <property type="entry name" value="P-loop containing nucleoside triphosphate hydrolases"/>
    <property type="match status" value="1"/>
</dbReference>
<dbReference type="SUPFAM" id="SSF48019">
    <property type="entry name" value="post-AAA+ oligomerization domain-like"/>
    <property type="match status" value="1"/>
</dbReference>
<keyword id="KW-0067">ATP-binding</keyword>
<keyword id="KW-0235">DNA replication</keyword>
<keyword id="KW-0547">Nucleotide-binding</keyword>
<keyword id="KW-1185">Reference proteome</keyword>
<accession>Q5UQ47</accession>
<organismHost>
    <name type="scientific">Acanthamoeba polyphaga</name>
    <name type="common">Amoeba</name>
    <dbReference type="NCBI Taxonomy" id="5757"/>
</organismHost>
<comment type="function">
    <text evidence="1">Part of the RFC clamp loader complex which loads the PCNA sliding clamp onto DNA.</text>
</comment>
<comment type="similarity">
    <text evidence="3">Belongs to the activator 1 small subunits family. RfcS subfamily.</text>
</comment>
<gene>
    <name type="ordered locus">MIMI_R395</name>
</gene>